<sequence length="115" mass="12629">MKPGIHPEYREIVFVDVSNNFSFKTRSTMATKETIKWEDGNEYPLAKIETSSESHPFYTGTQKIMDTAGRVEKFRQKFGSKAVAKASGDGAAKTAEKKAAAAEAKAAEKPVKKKA</sequence>
<feature type="chain" id="PRO_1000126825" description="Large ribosomal subunit protein bL31B">
    <location>
        <begin position="1"/>
        <end position="115"/>
    </location>
</feature>
<reference key="1">
    <citation type="journal article" date="2013" name="Proc. Natl. Acad. Sci. U.S.A.">
        <title>Polynucleobacter necessarius, a model for genome reduction in both free-living and symbiotic bacteria.</title>
        <authorList>
            <person name="Boscaro V."/>
            <person name="Felletti M."/>
            <person name="Vannini C."/>
            <person name="Ackerman M.S."/>
            <person name="Chain P.S."/>
            <person name="Malfatti S."/>
            <person name="Vergez L.M."/>
            <person name="Shin M."/>
            <person name="Doak T.G."/>
            <person name="Lynch M."/>
            <person name="Petroni G."/>
        </authorList>
    </citation>
    <scope>NUCLEOTIDE SEQUENCE [LARGE SCALE GENOMIC DNA]</scope>
    <source>
        <strain>STIR1</strain>
    </source>
</reference>
<evidence type="ECO:0000255" key="1">
    <source>
        <dbReference type="HAMAP-Rule" id="MF_00502"/>
    </source>
</evidence>
<evidence type="ECO:0000305" key="2"/>
<proteinExistence type="inferred from homology"/>
<organism>
    <name type="scientific">Polynucleobacter necessarius subsp. necessarius (strain STIR1)</name>
    <dbReference type="NCBI Taxonomy" id="452638"/>
    <lineage>
        <taxon>Bacteria</taxon>
        <taxon>Pseudomonadati</taxon>
        <taxon>Pseudomonadota</taxon>
        <taxon>Betaproteobacteria</taxon>
        <taxon>Burkholderiales</taxon>
        <taxon>Burkholderiaceae</taxon>
        <taxon>Polynucleobacter</taxon>
    </lineage>
</organism>
<name>RL31B_POLNS</name>
<protein>
    <recommendedName>
        <fullName evidence="1">Large ribosomal subunit protein bL31B</fullName>
    </recommendedName>
    <alternativeName>
        <fullName evidence="2">50S ribosomal protein L31 type B</fullName>
    </alternativeName>
</protein>
<accession>B1XU55</accession>
<gene>
    <name evidence="1" type="primary">rpmE2</name>
    <name type="ordered locus">Pnec_0637</name>
</gene>
<dbReference type="EMBL" id="CP001010">
    <property type="protein sequence ID" value="ACB43882.1"/>
    <property type="molecule type" value="Genomic_DNA"/>
</dbReference>
<dbReference type="SMR" id="B1XU55"/>
<dbReference type="STRING" id="452638.Pnec_0637"/>
<dbReference type="KEGG" id="pne:Pnec_0637"/>
<dbReference type="eggNOG" id="COG0254">
    <property type="taxonomic scope" value="Bacteria"/>
</dbReference>
<dbReference type="HOGENOM" id="CLU_114306_2_1_4"/>
<dbReference type="OrthoDB" id="9803251at2"/>
<dbReference type="GO" id="GO:1990904">
    <property type="term" value="C:ribonucleoprotein complex"/>
    <property type="evidence" value="ECO:0007669"/>
    <property type="project" value="UniProtKB-KW"/>
</dbReference>
<dbReference type="GO" id="GO:0005840">
    <property type="term" value="C:ribosome"/>
    <property type="evidence" value="ECO:0007669"/>
    <property type="project" value="UniProtKB-KW"/>
</dbReference>
<dbReference type="GO" id="GO:0003735">
    <property type="term" value="F:structural constituent of ribosome"/>
    <property type="evidence" value="ECO:0007669"/>
    <property type="project" value="InterPro"/>
</dbReference>
<dbReference type="GO" id="GO:0006412">
    <property type="term" value="P:translation"/>
    <property type="evidence" value="ECO:0007669"/>
    <property type="project" value="UniProtKB-UniRule"/>
</dbReference>
<dbReference type="Gene3D" id="4.10.830.30">
    <property type="entry name" value="Ribosomal protein L31"/>
    <property type="match status" value="1"/>
</dbReference>
<dbReference type="HAMAP" id="MF_00502">
    <property type="entry name" value="Ribosomal_bL31_2"/>
    <property type="match status" value="1"/>
</dbReference>
<dbReference type="InterPro" id="IPR034704">
    <property type="entry name" value="Ribosomal_bL28/bL31-like_sf"/>
</dbReference>
<dbReference type="InterPro" id="IPR002150">
    <property type="entry name" value="Ribosomal_bL31"/>
</dbReference>
<dbReference type="InterPro" id="IPR027493">
    <property type="entry name" value="Ribosomal_bL31_B"/>
</dbReference>
<dbReference type="InterPro" id="IPR042105">
    <property type="entry name" value="Ribosomal_bL31_sf"/>
</dbReference>
<dbReference type="NCBIfam" id="TIGR00105">
    <property type="entry name" value="L31"/>
    <property type="match status" value="1"/>
</dbReference>
<dbReference type="NCBIfam" id="NF002462">
    <property type="entry name" value="PRK01678.1"/>
    <property type="match status" value="1"/>
</dbReference>
<dbReference type="PANTHER" id="PTHR33280">
    <property type="entry name" value="50S RIBOSOMAL PROTEIN L31, CHLOROPLASTIC"/>
    <property type="match status" value="1"/>
</dbReference>
<dbReference type="PANTHER" id="PTHR33280:SF1">
    <property type="entry name" value="LARGE RIBOSOMAL SUBUNIT PROTEIN BL31C"/>
    <property type="match status" value="1"/>
</dbReference>
<dbReference type="Pfam" id="PF01197">
    <property type="entry name" value="Ribosomal_L31"/>
    <property type="match status" value="1"/>
</dbReference>
<dbReference type="PRINTS" id="PR01249">
    <property type="entry name" value="RIBOSOMALL31"/>
</dbReference>
<dbReference type="SUPFAM" id="SSF143800">
    <property type="entry name" value="L28p-like"/>
    <property type="match status" value="1"/>
</dbReference>
<dbReference type="PROSITE" id="PS01143">
    <property type="entry name" value="RIBOSOMAL_L31"/>
    <property type="match status" value="1"/>
</dbReference>
<comment type="subunit">
    <text evidence="1">Part of the 50S ribosomal subunit.</text>
</comment>
<comment type="similarity">
    <text evidence="1">Belongs to the bacterial ribosomal protein bL31 family. Type B subfamily.</text>
</comment>
<keyword id="KW-0687">Ribonucleoprotein</keyword>
<keyword id="KW-0689">Ribosomal protein</keyword>